<evidence type="ECO:0000255" key="1">
    <source>
        <dbReference type="HAMAP-Rule" id="MF_00379"/>
    </source>
</evidence>
<gene>
    <name evidence="1" type="primary">mnmE</name>
    <name evidence="1" type="synonym">trmE</name>
    <name type="ordered locus">CLI_3888</name>
</gene>
<reference key="1">
    <citation type="submission" date="2007-06" db="EMBL/GenBank/DDBJ databases">
        <authorList>
            <person name="Brinkac L.M."/>
            <person name="Daugherty S."/>
            <person name="Dodson R.J."/>
            <person name="Madupu R."/>
            <person name="Brown J.L."/>
            <person name="Bruce D."/>
            <person name="Detter C."/>
            <person name="Munk C."/>
            <person name="Smith L.A."/>
            <person name="Smith T.J."/>
            <person name="White O."/>
            <person name="Brettin T.S."/>
        </authorList>
    </citation>
    <scope>NUCLEOTIDE SEQUENCE [LARGE SCALE GENOMIC DNA]</scope>
    <source>
        <strain>Langeland / NCTC 10281 / Type F</strain>
    </source>
</reference>
<organism>
    <name type="scientific">Clostridium botulinum (strain Langeland / NCTC 10281 / Type F)</name>
    <dbReference type="NCBI Taxonomy" id="441772"/>
    <lineage>
        <taxon>Bacteria</taxon>
        <taxon>Bacillati</taxon>
        <taxon>Bacillota</taxon>
        <taxon>Clostridia</taxon>
        <taxon>Eubacteriales</taxon>
        <taxon>Clostridiaceae</taxon>
        <taxon>Clostridium</taxon>
    </lineage>
</organism>
<accession>A7GJN9</accession>
<dbReference type="EC" id="3.6.-.-" evidence="1"/>
<dbReference type="EMBL" id="CP000728">
    <property type="protein sequence ID" value="ABS39311.1"/>
    <property type="molecule type" value="Genomic_DNA"/>
</dbReference>
<dbReference type="RefSeq" id="WP_012101232.1">
    <property type="nucleotide sequence ID" value="NC_009699.1"/>
</dbReference>
<dbReference type="SMR" id="A7GJN9"/>
<dbReference type="KEGG" id="cbf:CLI_3888"/>
<dbReference type="HOGENOM" id="CLU_019624_4_1_9"/>
<dbReference type="Proteomes" id="UP000002410">
    <property type="component" value="Chromosome"/>
</dbReference>
<dbReference type="GO" id="GO:0005829">
    <property type="term" value="C:cytosol"/>
    <property type="evidence" value="ECO:0007669"/>
    <property type="project" value="TreeGrafter"/>
</dbReference>
<dbReference type="GO" id="GO:0005525">
    <property type="term" value="F:GTP binding"/>
    <property type="evidence" value="ECO:0007669"/>
    <property type="project" value="UniProtKB-UniRule"/>
</dbReference>
<dbReference type="GO" id="GO:0003924">
    <property type="term" value="F:GTPase activity"/>
    <property type="evidence" value="ECO:0007669"/>
    <property type="project" value="UniProtKB-UniRule"/>
</dbReference>
<dbReference type="GO" id="GO:0046872">
    <property type="term" value="F:metal ion binding"/>
    <property type="evidence" value="ECO:0007669"/>
    <property type="project" value="UniProtKB-KW"/>
</dbReference>
<dbReference type="GO" id="GO:0030488">
    <property type="term" value="P:tRNA methylation"/>
    <property type="evidence" value="ECO:0007669"/>
    <property type="project" value="TreeGrafter"/>
</dbReference>
<dbReference type="GO" id="GO:0002098">
    <property type="term" value="P:tRNA wobble uridine modification"/>
    <property type="evidence" value="ECO:0007669"/>
    <property type="project" value="TreeGrafter"/>
</dbReference>
<dbReference type="CDD" id="cd04164">
    <property type="entry name" value="trmE"/>
    <property type="match status" value="1"/>
</dbReference>
<dbReference type="CDD" id="cd14858">
    <property type="entry name" value="TrmE_N"/>
    <property type="match status" value="1"/>
</dbReference>
<dbReference type="FunFam" id="3.30.1360.120:FF:000003">
    <property type="entry name" value="tRNA modification GTPase MnmE"/>
    <property type="match status" value="1"/>
</dbReference>
<dbReference type="FunFam" id="3.40.50.300:FF:000494">
    <property type="entry name" value="tRNA modification GTPase MnmE"/>
    <property type="match status" value="1"/>
</dbReference>
<dbReference type="Gene3D" id="3.40.50.300">
    <property type="entry name" value="P-loop containing nucleotide triphosphate hydrolases"/>
    <property type="match status" value="1"/>
</dbReference>
<dbReference type="Gene3D" id="3.30.1360.120">
    <property type="entry name" value="Probable tRNA modification gtpase trme, domain 1"/>
    <property type="match status" value="1"/>
</dbReference>
<dbReference type="Gene3D" id="1.20.120.430">
    <property type="entry name" value="tRNA modification GTPase MnmE domain 2"/>
    <property type="match status" value="1"/>
</dbReference>
<dbReference type="HAMAP" id="MF_00379">
    <property type="entry name" value="GTPase_MnmE"/>
    <property type="match status" value="1"/>
</dbReference>
<dbReference type="InterPro" id="IPR031168">
    <property type="entry name" value="G_TrmE"/>
</dbReference>
<dbReference type="InterPro" id="IPR006073">
    <property type="entry name" value="GTP-bd"/>
</dbReference>
<dbReference type="InterPro" id="IPR018948">
    <property type="entry name" value="GTP-bd_TrmE_N"/>
</dbReference>
<dbReference type="InterPro" id="IPR004520">
    <property type="entry name" value="GTPase_MnmE"/>
</dbReference>
<dbReference type="InterPro" id="IPR027368">
    <property type="entry name" value="MnmE_dom2"/>
</dbReference>
<dbReference type="InterPro" id="IPR025867">
    <property type="entry name" value="MnmE_helical"/>
</dbReference>
<dbReference type="InterPro" id="IPR027417">
    <property type="entry name" value="P-loop_NTPase"/>
</dbReference>
<dbReference type="InterPro" id="IPR005225">
    <property type="entry name" value="Small_GTP-bd"/>
</dbReference>
<dbReference type="InterPro" id="IPR027266">
    <property type="entry name" value="TrmE/GcvT_dom1"/>
</dbReference>
<dbReference type="NCBIfam" id="TIGR00450">
    <property type="entry name" value="mnmE_trmE_thdF"/>
    <property type="match status" value="1"/>
</dbReference>
<dbReference type="NCBIfam" id="NF003661">
    <property type="entry name" value="PRK05291.1-3"/>
    <property type="match status" value="1"/>
</dbReference>
<dbReference type="NCBIfam" id="TIGR00231">
    <property type="entry name" value="small_GTP"/>
    <property type="match status" value="1"/>
</dbReference>
<dbReference type="PANTHER" id="PTHR42714">
    <property type="entry name" value="TRNA MODIFICATION GTPASE GTPBP3"/>
    <property type="match status" value="1"/>
</dbReference>
<dbReference type="PANTHER" id="PTHR42714:SF2">
    <property type="entry name" value="TRNA MODIFICATION GTPASE GTPBP3, MITOCHONDRIAL"/>
    <property type="match status" value="1"/>
</dbReference>
<dbReference type="Pfam" id="PF01926">
    <property type="entry name" value="MMR_HSR1"/>
    <property type="match status" value="1"/>
</dbReference>
<dbReference type="Pfam" id="PF12631">
    <property type="entry name" value="MnmE_helical"/>
    <property type="match status" value="1"/>
</dbReference>
<dbReference type="Pfam" id="PF10396">
    <property type="entry name" value="TrmE_N"/>
    <property type="match status" value="1"/>
</dbReference>
<dbReference type="SUPFAM" id="SSF52540">
    <property type="entry name" value="P-loop containing nucleoside triphosphate hydrolases"/>
    <property type="match status" value="1"/>
</dbReference>
<dbReference type="SUPFAM" id="SSF116878">
    <property type="entry name" value="TrmE connector domain"/>
    <property type="match status" value="1"/>
</dbReference>
<dbReference type="PROSITE" id="PS51709">
    <property type="entry name" value="G_TRME"/>
    <property type="match status" value="1"/>
</dbReference>
<feature type="chain" id="PRO_1000048819" description="tRNA modification GTPase MnmE">
    <location>
        <begin position="1"/>
        <end position="461"/>
    </location>
</feature>
<feature type="domain" description="TrmE-type G">
    <location>
        <begin position="223"/>
        <end position="383"/>
    </location>
</feature>
<feature type="binding site" evidence="1">
    <location>
        <position position="23"/>
    </location>
    <ligand>
        <name>(6S)-5-formyl-5,6,7,8-tetrahydrofolate</name>
        <dbReference type="ChEBI" id="CHEBI:57457"/>
    </ligand>
</feature>
<feature type="binding site" evidence="1">
    <location>
        <position position="88"/>
    </location>
    <ligand>
        <name>(6S)-5-formyl-5,6,7,8-tetrahydrofolate</name>
        <dbReference type="ChEBI" id="CHEBI:57457"/>
    </ligand>
</feature>
<feature type="binding site" evidence="1">
    <location>
        <position position="127"/>
    </location>
    <ligand>
        <name>(6S)-5-formyl-5,6,7,8-tetrahydrofolate</name>
        <dbReference type="ChEBI" id="CHEBI:57457"/>
    </ligand>
</feature>
<feature type="binding site" evidence="1">
    <location>
        <begin position="233"/>
        <end position="238"/>
    </location>
    <ligand>
        <name>GTP</name>
        <dbReference type="ChEBI" id="CHEBI:37565"/>
    </ligand>
</feature>
<feature type="binding site" evidence="1">
    <location>
        <position position="233"/>
    </location>
    <ligand>
        <name>K(+)</name>
        <dbReference type="ChEBI" id="CHEBI:29103"/>
    </ligand>
</feature>
<feature type="binding site" evidence="1">
    <location>
        <position position="237"/>
    </location>
    <ligand>
        <name>Mg(2+)</name>
        <dbReference type="ChEBI" id="CHEBI:18420"/>
    </ligand>
</feature>
<feature type="binding site" evidence="1">
    <location>
        <begin position="252"/>
        <end position="258"/>
    </location>
    <ligand>
        <name>GTP</name>
        <dbReference type="ChEBI" id="CHEBI:37565"/>
    </ligand>
</feature>
<feature type="binding site" evidence="1">
    <location>
        <position position="252"/>
    </location>
    <ligand>
        <name>K(+)</name>
        <dbReference type="ChEBI" id="CHEBI:29103"/>
    </ligand>
</feature>
<feature type="binding site" evidence="1">
    <location>
        <position position="254"/>
    </location>
    <ligand>
        <name>K(+)</name>
        <dbReference type="ChEBI" id="CHEBI:29103"/>
    </ligand>
</feature>
<feature type="binding site" evidence="1">
    <location>
        <position position="257"/>
    </location>
    <ligand>
        <name>K(+)</name>
        <dbReference type="ChEBI" id="CHEBI:29103"/>
    </ligand>
</feature>
<feature type="binding site" evidence="1">
    <location>
        <position position="258"/>
    </location>
    <ligand>
        <name>Mg(2+)</name>
        <dbReference type="ChEBI" id="CHEBI:18420"/>
    </ligand>
</feature>
<feature type="binding site" evidence="1">
    <location>
        <begin position="277"/>
        <end position="280"/>
    </location>
    <ligand>
        <name>GTP</name>
        <dbReference type="ChEBI" id="CHEBI:37565"/>
    </ligand>
</feature>
<feature type="binding site" evidence="1">
    <location>
        <position position="461"/>
    </location>
    <ligand>
        <name>(6S)-5-formyl-5,6,7,8-tetrahydrofolate</name>
        <dbReference type="ChEBI" id="CHEBI:57457"/>
    </ligand>
</feature>
<proteinExistence type="inferred from homology"/>
<protein>
    <recommendedName>
        <fullName evidence="1">tRNA modification GTPase MnmE</fullName>
        <ecNumber evidence="1">3.6.-.-</ecNumber>
    </recommendedName>
</protein>
<sequence>MKEFDTIAAVATPVGEGGISIIRISGDKSLDIVSSIFKGKNDRTLDDIKPYSMRYGFIIEKESKEMIDEVLVSYMKGPRSFTAEDTLEINCHGGVIPTKKILKELIKSGARLAEPGEFTKRAFLNGRIDLSQAEAVIDIIRSKTDLSMKSALKQAEGTLSKEINSIRNRMIKIIAHIEATVDYPEDDLEEITGQKIKVDLKEIINKIDNLISASEEGKILREGLNTVIVGKPNVGKSSLLNALINENKAIVTEIPGTTRDVIEEYINIDGIPTKIVDTAGIRETEDVVEKIGVEKSKEKIDEADLVIFMLDLSKKIDEEDIEIMDFIKNKKYIVLLNKLDLNKDLNEENHFIKELDSKYIIKTSVKNNSGLNELKECIKNLFFSGEIKSDELTVTNARHQEALIRSRESCIQAIETLSDEISIDLASIDIRNAWKYLGEITGDTLDENIIDKIFSEFCLGK</sequence>
<keyword id="KW-0963">Cytoplasm</keyword>
<keyword id="KW-0342">GTP-binding</keyword>
<keyword id="KW-0378">Hydrolase</keyword>
<keyword id="KW-0460">Magnesium</keyword>
<keyword id="KW-0479">Metal-binding</keyword>
<keyword id="KW-0547">Nucleotide-binding</keyword>
<keyword id="KW-0630">Potassium</keyword>
<keyword id="KW-0819">tRNA processing</keyword>
<name>MNME_CLOBL</name>
<comment type="function">
    <text evidence="1">Exhibits a very high intrinsic GTPase hydrolysis rate. Involved in the addition of a carboxymethylaminomethyl (cmnm) group at the wobble position (U34) of certain tRNAs, forming tRNA-cmnm(5)s(2)U34.</text>
</comment>
<comment type="cofactor">
    <cofactor evidence="1">
        <name>K(+)</name>
        <dbReference type="ChEBI" id="CHEBI:29103"/>
    </cofactor>
    <text evidence="1">Binds 1 potassium ion per subunit.</text>
</comment>
<comment type="subunit">
    <text evidence="1">Homodimer. Heterotetramer of two MnmE and two MnmG subunits.</text>
</comment>
<comment type="subcellular location">
    <subcellularLocation>
        <location evidence="1">Cytoplasm</location>
    </subcellularLocation>
</comment>
<comment type="similarity">
    <text evidence="1">Belongs to the TRAFAC class TrmE-Era-EngA-EngB-Septin-like GTPase superfamily. TrmE GTPase family.</text>
</comment>